<reference key="1">
    <citation type="journal article" date="1991" name="Proc. Natl. Acad. Sci. U.S.A.">
        <title>Characterization of a member of the immunoglobulin gene superfamily that possibly represents an additional class of growth factor receptor.</title>
        <authorList>
            <person name="Chou Y.-H."/>
            <person name="Hayman M.J."/>
        </authorList>
    </citation>
    <scope>NUCLEOTIDE SEQUENCE [MRNA]</scope>
    <scope>TISSUE SPECIFICITY</scope>
    <source>
        <tissue>Embryonic brain</tissue>
    </source>
</reference>
<comment type="function">
    <text evidence="1">Inactive tyrosine kinase involved in Wnt signaling. pathway (By similarity).</text>
</comment>
<comment type="subcellular location">
    <subcellularLocation>
        <location>Membrane</location>
        <topology>Single-pass type I membrane protein</topology>
    </subcellularLocation>
</comment>
<comment type="tissue specificity">
    <text evidence="5">Expressed in bone marrow, spleen, bursa, thymus and brain. Weakly expressed in fibroblasts. Also expressed in embryonic liver.</text>
</comment>
<comment type="domain">
    <text>The protein kinase domain is predicted to be catalytically inactive.</text>
</comment>
<comment type="similarity">
    <text evidence="4">Belongs to the protein kinase superfamily. Tyr protein kinase family. Insulin receptor subfamily.</text>
</comment>
<name>PTK7_CHICK</name>
<sequence length="1051" mass="116366">MAALRALLLLLAVGAQAAIRFAKEPYSQDALHGRSAILRCEVEEPAHVEFEWLQNGLPIQDTEQRFKEGSNLQFAAVDRHRDAGSFQCVARNVQTGEEARTANASFNIKWMETGSVVLKQPASAAEIQPSSTVVLRCHIDGHPRPTWQWFRDGAPLPDGRGTYSVSSKERTLTLRGAGPDDNGLYYCSARPRAVGSVCSQDNFTLNIIDESFPQAVVVPEDLIVTKNEEAMFDCQFAAVPPPTQEWLFEDSPITNRSKTTVFANGSLLITQVKARSTGVYKCIGHGQKGKALVLKATLRLAEIEEMAPFSPKVLTANQGHRVSCACPRGVPTPQVWWERNQERVPTAGRVYQEAEQLVFTSITEADAGIYTCHAANKAGEKKQELSITVATVPKWVEMPKDSQLEESKPGYLHCLSKASLKPTVTWYRNGVSISEDSRFEISENGTLRINNVEVYDGTMYKCVSSTPAGSIEGYARVHVLEKLKFTPPPQPLQCMEFNKEVTVSCSATGREKPTIQWTKTDGSSLPSHVSHRAGILSFHKVSRSDSGNYTCIASNSPQGEIRATVQLVVAVYVTFKLEPEPTTVYQGHTAMFQCQAEGDPVPHIQWKGKDKILDPSKLLPRIQIMPNGSLVIYDVTTEDSGKYTCIAGNSCNIKHREAFLYVVDKPAAEEDEGPSSHTPYKMIQTIGLSVGAAVAYIIIVLGLMFYCKKRRKAKRLKKHPEGEEPEMECLNGGTLLQNGQTTAEIQEEVALTNLGSSSGASKRHSARDKMHFPRSNLQTITTLGRGEFGEVFLAKAKGAEDAEGEALVLVKSLQTRDEQLQLDFRREAEMFGKLNHVNVVRLLGLCREAEPHYMVLEYVDLGDLKQFLRISKSKDESLKPQPLSTKHKVSLCTQVALGMEHLSNGRFVHRDLAARNCLVSAQRQVKVSALSLSKDVYNSEYYHFRQAWIPLRWMPPEAVLEDEFSTKSDVWSFGVLMWEVFTQGEMPYAPLADDEVLAGLKSGKTKLPQPEGCPSRLTKLMQRCWAPSPKDRPSFSELAAALGDSPADSKA</sequence>
<dbReference type="EMBL" id="M63437">
    <property type="protein sequence ID" value="AAA48933.1"/>
    <property type="molecule type" value="mRNA"/>
</dbReference>
<dbReference type="PIR" id="A39712">
    <property type="entry name" value="A39712"/>
</dbReference>
<dbReference type="RefSeq" id="NP_001026206.1">
    <property type="nucleotide sequence ID" value="NM_001031035.1"/>
</dbReference>
<dbReference type="SMR" id="Q91048"/>
<dbReference type="FunCoup" id="Q91048">
    <property type="interactions" value="668"/>
</dbReference>
<dbReference type="STRING" id="9031.ENSGALP00000014004"/>
<dbReference type="GlyCosmos" id="Q91048">
    <property type="glycosylation" value="7 sites, No reported glycans"/>
</dbReference>
<dbReference type="GlyGen" id="Q91048">
    <property type="glycosylation" value="8 sites"/>
</dbReference>
<dbReference type="PaxDb" id="9031-ENSGALP00000014004"/>
<dbReference type="GeneID" id="421257"/>
<dbReference type="KEGG" id="gga:421257"/>
<dbReference type="CTD" id="5754"/>
<dbReference type="VEuPathDB" id="HostDB:geneid_421257"/>
<dbReference type="eggNOG" id="KOG1026">
    <property type="taxonomic scope" value="Eukaryota"/>
</dbReference>
<dbReference type="eggNOG" id="KOG4475">
    <property type="taxonomic scope" value="Eukaryota"/>
</dbReference>
<dbReference type="InParanoid" id="Q91048"/>
<dbReference type="OrthoDB" id="2413561at2759"/>
<dbReference type="PhylomeDB" id="Q91048"/>
<dbReference type="PRO" id="PR:Q91048"/>
<dbReference type="Proteomes" id="UP000000539">
    <property type="component" value="Unassembled WGS sequence"/>
</dbReference>
<dbReference type="GO" id="GO:0030424">
    <property type="term" value="C:axon"/>
    <property type="evidence" value="ECO:0000318"/>
    <property type="project" value="GO_Central"/>
</dbReference>
<dbReference type="GO" id="GO:0005911">
    <property type="term" value="C:cell-cell junction"/>
    <property type="evidence" value="ECO:0000318"/>
    <property type="project" value="GO_Central"/>
</dbReference>
<dbReference type="GO" id="GO:0043025">
    <property type="term" value="C:neuronal cell body"/>
    <property type="evidence" value="ECO:0000318"/>
    <property type="project" value="GO_Central"/>
</dbReference>
<dbReference type="GO" id="GO:0005886">
    <property type="term" value="C:plasma membrane"/>
    <property type="evidence" value="ECO:0000318"/>
    <property type="project" value="GO_Central"/>
</dbReference>
<dbReference type="GO" id="GO:0005524">
    <property type="term" value="F:ATP binding"/>
    <property type="evidence" value="ECO:0007669"/>
    <property type="project" value="InterPro"/>
</dbReference>
<dbReference type="GO" id="GO:0008046">
    <property type="term" value="F:axon guidance receptor activity"/>
    <property type="evidence" value="ECO:0000318"/>
    <property type="project" value="GO_Central"/>
</dbReference>
<dbReference type="GO" id="GO:0004713">
    <property type="term" value="F:protein tyrosine kinase activity"/>
    <property type="evidence" value="ECO:0007669"/>
    <property type="project" value="InterPro"/>
</dbReference>
<dbReference type="GO" id="GO:0007156">
    <property type="term" value="P:homophilic cell adhesion via plasma membrane adhesion molecules"/>
    <property type="evidence" value="ECO:0000318"/>
    <property type="project" value="GO_Central"/>
</dbReference>
<dbReference type="GO" id="GO:0060828">
    <property type="term" value="P:regulation of canonical Wnt signaling pathway"/>
    <property type="evidence" value="ECO:0000318"/>
    <property type="project" value="GO_Central"/>
</dbReference>
<dbReference type="GO" id="GO:0050808">
    <property type="term" value="P:synapse organization"/>
    <property type="evidence" value="ECO:0000318"/>
    <property type="project" value="GO_Central"/>
</dbReference>
<dbReference type="GO" id="GO:0016055">
    <property type="term" value="P:Wnt signaling pathway"/>
    <property type="evidence" value="ECO:0007669"/>
    <property type="project" value="UniProtKB-KW"/>
</dbReference>
<dbReference type="CDD" id="cd00096">
    <property type="entry name" value="Ig"/>
    <property type="match status" value="1"/>
</dbReference>
<dbReference type="CDD" id="cd05760">
    <property type="entry name" value="Ig2_PTK7"/>
    <property type="match status" value="1"/>
</dbReference>
<dbReference type="CDD" id="cd05046">
    <property type="entry name" value="PTK_CCK4"/>
    <property type="match status" value="1"/>
</dbReference>
<dbReference type="FunFam" id="1.10.510.10:FF:000200">
    <property type="entry name" value="inactive tyrosine-protein kinase 7"/>
    <property type="match status" value="1"/>
</dbReference>
<dbReference type="FunFam" id="2.60.40.10:FF:000341">
    <property type="entry name" value="inactive tyrosine-protein kinase 7"/>
    <property type="match status" value="1"/>
</dbReference>
<dbReference type="FunFam" id="2.60.40.10:FF:000343">
    <property type="entry name" value="inactive tyrosine-protein kinase 7"/>
    <property type="match status" value="1"/>
</dbReference>
<dbReference type="FunFam" id="2.60.40.10:FF:000377">
    <property type="entry name" value="Protein tyrosine kinase 7 (inactive)"/>
    <property type="match status" value="1"/>
</dbReference>
<dbReference type="FunFam" id="2.60.40.10:FF:000395">
    <property type="entry name" value="Protein tyrosine kinase 7 (inactive)"/>
    <property type="match status" value="1"/>
</dbReference>
<dbReference type="FunFam" id="2.60.40.10:FF:000402">
    <property type="entry name" value="Protein tyrosine kinase 7 (inactive)"/>
    <property type="match status" value="1"/>
</dbReference>
<dbReference type="FunFam" id="2.60.40.10:FF:000432">
    <property type="entry name" value="Protein tyrosine kinase 7 (inactive)"/>
    <property type="match status" value="1"/>
</dbReference>
<dbReference type="FunFam" id="3.30.200.20:FF:000167">
    <property type="entry name" value="Putative inactive tyrosine-protein kinase 7"/>
    <property type="match status" value="1"/>
</dbReference>
<dbReference type="Gene3D" id="2.60.40.10">
    <property type="entry name" value="Immunoglobulins"/>
    <property type="match status" value="7"/>
</dbReference>
<dbReference type="Gene3D" id="3.30.200.20">
    <property type="entry name" value="Phosphorylase Kinase, domain 1"/>
    <property type="match status" value="1"/>
</dbReference>
<dbReference type="Gene3D" id="1.10.510.10">
    <property type="entry name" value="Transferase(Phosphotransferase) domain 1"/>
    <property type="match status" value="1"/>
</dbReference>
<dbReference type="InterPro" id="IPR050958">
    <property type="entry name" value="Cell_Adh-Cytoskel_Orgn"/>
</dbReference>
<dbReference type="InterPro" id="IPR007110">
    <property type="entry name" value="Ig-like_dom"/>
</dbReference>
<dbReference type="InterPro" id="IPR036179">
    <property type="entry name" value="Ig-like_dom_sf"/>
</dbReference>
<dbReference type="InterPro" id="IPR013783">
    <property type="entry name" value="Ig-like_fold"/>
</dbReference>
<dbReference type="InterPro" id="IPR013098">
    <property type="entry name" value="Ig_I-set"/>
</dbReference>
<dbReference type="InterPro" id="IPR003599">
    <property type="entry name" value="Ig_sub"/>
</dbReference>
<dbReference type="InterPro" id="IPR003598">
    <property type="entry name" value="Ig_sub2"/>
</dbReference>
<dbReference type="InterPro" id="IPR011009">
    <property type="entry name" value="Kinase-like_dom_sf"/>
</dbReference>
<dbReference type="InterPro" id="IPR000719">
    <property type="entry name" value="Prot_kinase_dom"/>
</dbReference>
<dbReference type="InterPro" id="IPR001245">
    <property type="entry name" value="Ser-Thr/Tyr_kinase_cat_dom"/>
</dbReference>
<dbReference type="InterPro" id="IPR008266">
    <property type="entry name" value="Tyr_kinase_AS"/>
</dbReference>
<dbReference type="InterPro" id="IPR020635">
    <property type="entry name" value="Tyr_kinase_cat_dom"/>
</dbReference>
<dbReference type="PANTHER" id="PTHR45080">
    <property type="entry name" value="CONTACTIN 5"/>
    <property type="match status" value="1"/>
</dbReference>
<dbReference type="PANTHER" id="PTHR45080:SF21">
    <property type="entry name" value="INACTIVE TYROSINE-PROTEIN KINASE 7"/>
    <property type="match status" value="1"/>
</dbReference>
<dbReference type="Pfam" id="PF07679">
    <property type="entry name" value="I-set"/>
    <property type="match status" value="4"/>
</dbReference>
<dbReference type="Pfam" id="PF13927">
    <property type="entry name" value="Ig_3"/>
    <property type="match status" value="3"/>
</dbReference>
<dbReference type="Pfam" id="PF07714">
    <property type="entry name" value="PK_Tyr_Ser-Thr"/>
    <property type="match status" value="1"/>
</dbReference>
<dbReference type="PIRSF" id="PIRSF000615">
    <property type="entry name" value="TyrPK_CSF1-R"/>
    <property type="match status" value="1"/>
</dbReference>
<dbReference type="PRINTS" id="PR00109">
    <property type="entry name" value="TYRKINASE"/>
</dbReference>
<dbReference type="SMART" id="SM00409">
    <property type="entry name" value="IG"/>
    <property type="match status" value="7"/>
</dbReference>
<dbReference type="SMART" id="SM00408">
    <property type="entry name" value="IGc2"/>
    <property type="match status" value="7"/>
</dbReference>
<dbReference type="SMART" id="SM00219">
    <property type="entry name" value="TyrKc"/>
    <property type="match status" value="1"/>
</dbReference>
<dbReference type="SUPFAM" id="SSF48726">
    <property type="entry name" value="Immunoglobulin"/>
    <property type="match status" value="7"/>
</dbReference>
<dbReference type="SUPFAM" id="SSF56112">
    <property type="entry name" value="Protein kinase-like (PK-like)"/>
    <property type="match status" value="1"/>
</dbReference>
<dbReference type="PROSITE" id="PS50835">
    <property type="entry name" value="IG_LIKE"/>
    <property type="match status" value="7"/>
</dbReference>
<dbReference type="PROSITE" id="PS50011">
    <property type="entry name" value="PROTEIN_KINASE_DOM"/>
    <property type="match status" value="1"/>
</dbReference>
<dbReference type="PROSITE" id="PS00109">
    <property type="entry name" value="PROTEIN_KINASE_TYR"/>
    <property type="match status" value="1"/>
</dbReference>
<evidence type="ECO:0000250" key="1"/>
<evidence type="ECO:0000255" key="2"/>
<evidence type="ECO:0000255" key="3">
    <source>
        <dbReference type="PROSITE-ProRule" id="PRU00114"/>
    </source>
</evidence>
<evidence type="ECO:0000255" key="4">
    <source>
        <dbReference type="PROSITE-ProRule" id="PRU00159"/>
    </source>
</evidence>
<evidence type="ECO:0000269" key="5">
    <source>
    </source>
</evidence>
<proteinExistence type="evidence at transcript level"/>
<organism>
    <name type="scientific">Gallus gallus</name>
    <name type="common">Chicken</name>
    <dbReference type="NCBI Taxonomy" id="9031"/>
    <lineage>
        <taxon>Eukaryota</taxon>
        <taxon>Metazoa</taxon>
        <taxon>Chordata</taxon>
        <taxon>Craniata</taxon>
        <taxon>Vertebrata</taxon>
        <taxon>Euteleostomi</taxon>
        <taxon>Archelosauria</taxon>
        <taxon>Archosauria</taxon>
        <taxon>Dinosauria</taxon>
        <taxon>Saurischia</taxon>
        <taxon>Theropoda</taxon>
        <taxon>Coelurosauria</taxon>
        <taxon>Aves</taxon>
        <taxon>Neognathae</taxon>
        <taxon>Galloanserae</taxon>
        <taxon>Galliformes</taxon>
        <taxon>Phasianidae</taxon>
        <taxon>Phasianinae</taxon>
        <taxon>Gallus</taxon>
    </lineage>
</organism>
<gene>
    <name type="primary">PTK7</name>
    <name type="synonym">KLG</name>
</gene>
<protein>
    <recommendedName>
        <fullName>Inactive tyrosine-protein kinase 7</fullName>
    </recommendedName>
    <alternativeName>
        <fullName>Kinase-like protein</fullName>
    </alternativeName>
    <alternativeName>
        <fullName>Protein-tyrosine kinase 7</fullName>
    </alternativeName>
    <alternativeName>
        <fullName>Pseudo tyrosine kinase receptor 7</fullName>
    </alternativeName>
    <alternativeName>
        <fullName>Tyrosine-protein kinase-like 7</fullName>
    </alternativeName>
</protein>
<feature type="signal peptide" evidence="2">
    <location>
        <begin position="1"/>
        <end position="22"/>
    </location>
</feature>
<feature type="chain" id="PRO_0000016749" description="Inactive tyrosine-protein kinase 7">
    <location>
        <begin position="23"/>
        <end position="1051"/>
    </location>
</feature>
<feature type="topological domain" description="Extracellular" evidence="2">
    <location>
        <begin position="23"/>
        <end position="685"/>
    </location>
</feature>
<feature type="transmembrane region" description="Helical" evidence="2">
    <location>
        <begin position="686"/>
        <end position="706"/>
    </location>
</feature>
<feature type="topological domain" description="Cytoplasmic" evidence="2">
    <location>
        <begin position="707"/>
        <end position="1051"/>
    </location>
</feature>
<feature type="domain" description="Ig-like C2-type 1">
    <location>
        <begin position="23"/>
        <end position="105"/>
    </location>
</feature>
<feature type="domain" description="Ig-like C2-type 2">
    <location>
        <begin position="115"/>
        <end position="204"/>
    </location>
</feature>
<feature type="domain" description="Ig-like C2-type 3">
    <location>
        <begin position="213"/>
        <end position="298"/>
    </location>
</feature>
<feature type="domain" description="Ig-like C2-type 4">
    <location>
        <begin position="308"/>
        <end position="388"/>
    </location>
</feature>
<feature type="domain" description="Ig-like C2-type 5">
    <location>
        <begin position="393"/>
        <end position="472"/>
    </location>
</feature>
<feature type="domain" description="Ig-like C2-type 6">
    <location>
        <begin position="487"/>
        <end position="566"/>
    </location>
</feature>
<feature type="domain" description="Ig-like C2-type 7">
    <location>
        <begin position="573"/>
        <end position="661"/>
    </location>
</feature>
<feature type="domain" description="Protein kinase; inactive" evidence="4">
    <location>
        <begin position="777"/>
        <end position="1048"/>
    </location>
</feature>
<feature type="glycosylation site" description="N-linked (GlcNAc...) asparagine" evidence="2">
    <location>
        <position position="103"/>
    </location>
</feature>
<feature type="glycosylation site" description="N-linked (GlcNAc...) asparagine" evidence="2">
    <location>
        <position position="202"/>
    </location>
</feature>
<feature type="glycosylation site" description="N-linked (GlcNAc...) asparagine" evidence="2">
    <location>
        <position position="255"/>
    </location>
</feature>
<feature type="glycosylation site" description="N-linked (GlcNAc...) asparagine" evidence="2">
    <location>
        <position position="264"/>
    </location>
</feature>
<feature type="glycosylation site" description="N-linked (GlcNAc...) asparagine" evidence="2">
    <location>
        <position position="444"/>
    </location>
</feature>
<feature type="glycosylation site" description="N-linked (GlcNAc...) asparagine" evidence="2">
    <location>
        <position position="548"/>
    </location>
</feature>
<feature type="glycosylation site" description="N-linked (GlcNAc...) asparagine" evidence="2">
    <location>
        <position position="627"/>
    </location>
</feature>
<feature type="disulfide bond" evidence="3">
    <location>
        <begin position="40"/>
        <end position="88"/>
    </location>
</feature>
<feature type="disulfide bond" evidence="3">
    <location>
        <begin position="137"/>
        <end position="187"/>
    </location>
</feature>
<feature type="disulfide bond" evidence="3">
    <location>
        <begin position="234"/>
        <end position="282"/>
    </location>
</feature>
<feature type="disulfide bond" evidence="3">
    <location>
        <begin position="326"/>
        <end position="372"/>
    </location>
</feature>
<feature type="disulfide bond" evidence="3">
    <location>
        <begin position="414"/>
        <end position="462"/>
    </location>
</feature>
<feature type="disulfide bond" evidence="3">
    <location>
        <begin position="505"/>
        <end position="551"/>
    </location>
</feature>
<feature type="disulfide bond" evidence="3">
    <location>
        <begin position="594"/>
        <end position="645"/>
    </location>
</feature>
<accession>Q91048</accession>
<keyword id="KW-0130">Cell adhesion</keyword>
<keyword id="KW-1015">Disulfide bond</keyword>
<keyword id="KW-0325">Glycoprotein</keyword>
<keyword id="KW-0393">Immunoglobulin domain</keyword>
<keyword id="KW-0472">Membrane</keyword>
<keyword id="KW-0675">Receptor</keyword>
<keyword id="KW-1185">Reference proteome</keyword>
<keyword id="KW-0677">Repeat</keyword>
<keyword id="KW-0732">Signal</keyword>
<keyword id="KW-0812">Transmembrane</keyword>
<keyword id="KW-1133">Transmembrane helix</keyword>
<keyword id="KW-0879">Wnt signaling pathway</keyword>